<accession>A8IEY6</accession>
<name>THIG_AZOC5</name>
<sequence length="266" mass="28125">MNVNVPVPSTLADPLVIAGRTFSSRLFLGTAGYPNQKVFLDALEASGSEMATASIRRMSLEGYEESLADLLTGRVHILPNTAGCQTAKDAILTAELAREALETDWVKLEVIGDRELLYPNVEELLKATEELVNRGFVVLPYCNDDPVTCQKLADLGAATVMPLGSMIGTGLGIANPHMIELICARSPVPVVLDAGIGTASDAAQAMELGCAAVLLNTAVSKAHDPVRMARAFRYAVEGGRLARLAGRIPKKLHAEASSPEFGLVGS</sequence>
<keyword id="KW-0963">Cytoplasm</keyword>
<keyword id="KW-1185">Reference proteome</keyword>
<keyword id="KW-0704">Schiff base</keyword>
<keyword id="KW-0784">Thiamine biosynthesis</keyword>
<keyword id="KW-0808">Transferase</keyword>
<organism>
    <name type="scientific">Azorhizobium caulinodans (strain ATCC 43989 / DSM 5975 / JCM 20966 / LMG 6465 / NBRC 14845 / NCIMB 13405 / ORS 571)</name>
    <dbReference type="NCBI Taxonomy" id="438753"/>
    <lineage>
        <taxon>Bacteria</taxon>
        <taxon>Pseudomonadati</taxon>
        <taxon>Pseudomonadota</taxon>
        <taxon>Alphaproteobacteria</taxon>
        <taxon>Hyphomicrobiales</taxon>
        <taxon>Xanthobacteraceae</taxon>
        <taxon>Azorhizobium</taxon>
    </lineage>
</organism>
<gene>
    <name evidence="1" type="primary">thiG</name>
    <name type="ordered locus">AZC_3552</name>
</gene>
<reference key="1">
    <citation type="submission" date="2007-04" db="EMBL/GenBank/DDBJ databases">
        <title>Complete genome sequence of the nitrogen-fixing bacterium Azorhizobium caulinodans ORS571.</title>
        <authorList>
            <person name="Lee K.B."/>
            <person name="Backer P.D."/>
            <person name="Aono T."/>
            <person name="Liu C.T."/>
            <person name="Suzuki S."/>
            <person name="Suzuki T."/>
            <person name="Kaneko T."/>
            <person name="Yamada M."/>
            <person name="Tabata S."/>
            <person name="Kupfer D.M."/>
            <person name="Najar F.Z."/>
            <person name="Wiley G.B."/>
            <person name="Roe B."/>
            <person name="Binnewies T."/>
            <person name="Ussery D."/>
            <person name="Vereecke D."/>
            <person name="Gevers D."/>
            <person name="Holsters M."/>
            <person name="Oyaizu H."/>
        </authorList>
    </citation>
    <scope>NUCLEOTIDE SEQUENCE [LARGE SCALE GENOMIC DNA]</scope>
    <source>
        <strain>ATCC 43989 / DSM 5975 / JCM 20966 / LMG 6465 / NBRC 14845 / NCIMB 13405 / ORS 571</strain>
    </source>
</reference>
<proteinExistence type="inferred from homology"/>
<protein>
    <recommendedName>
        <fullName evidence="1">Thiazole synthase</fullName>
        <ecNumber evidence="1">2.8.1.10</ecNumber>
    </recommendedName>
</protein>
<evidence type="ECO:0000255" key="1">
    <source>
        <dbReference type="HAMAP-Rule" id="MF_00443"/>
    </source>
</evidence>
<dbReference type="EC" id="2.8.1.10" evidence="1"/>
<dbReference type="EMBL" id="AP009384">
    <property type="protein sequence ID" value="BAF89550.1"/>
    <property type="molecule type" value="Genomic_DNA"/>
</dbReference>
<dbReference type="RefSeq" id="WP_012172075.1">
    <property type="nucleotide sequence ID" value="NC_009937.1"/>
</dbReference>
<dbReference type="SMR" id="A8IEY6"/>
<dbReference type="STRING" id="438753.AZC_3552"/>
<dbReference type="KEGG" id="azc:AZC_3552"/>
<dbReference type="eggNOG" id="COG2022">
    <property type="taxonomic scope" value="Bacteria"/>
</dbReference>
<dbReference type="HOGENOM" id="CLU_062233_1_0_5"/>
<dbReference type="UniPathway" id="UPA00060"/>
<dbReference type="Proteomes" id="UP000000270">
    <property type="component" value="Chromosome"/>
</dbReference>
<dbReference type="GO" id="GO:0005737">
    <property type="term" value="C:cytoplasm"/>
    <property type="evidence" value="ECO:0007669"/>
    <property type="project" value="UniProtKB-SubCell"/>
</dbReference>
<dbReference type="GO" id="GO:1990107">
    <property type="term" value="F:thiazole synthase activity"/>
    <property type="evidence" value="ECO:0007669"/>
    <property type="project" value="UniProtKB-EC"/>
</dbReference>
<dbReference type="GO" id="GO:0009229">
    <property type="term" value="P:thiamine diphosphate biosynthetic process"/>
    <property type="evidence" value="ECO:0007669"/>
    <property type="project" value="UniProtKB-UniRule"/>
</dbReference>
<dbReference type="CDD" id="cd04728">
    <property type="entry name" value="ThiG"/>
    <property type="match status" value="1"/>
</dbReference>
<dbReference type="Gene3D" id="3.20.20.70">
    <property type="entry name" value="Aldolase class I"/>
    <property type="match status" value="1"/>
</dbReference>
<dbReference type="HAMAP" id="MF_00443">
    <property type="entry name" value="ThiG"/>
    <property type="match status" value="1"/>
</dbReference>
<dbReference type="InterPro" id="IPR013785">
    <property type="entry name" value="Aldolase_TIM"/>
</dbReference>
<dbReference type="InterPro" id="IPR033983">
    <property type="entry name" value="Thiazole_synthase_ThiG"/>
</dbReference>
<dbReference type="InterPro" id="IPR008867">
    <property type="entry name" value="ThiG"/>
</dbReference>
<dbReference type="PANTHER" id="PTHR34266">
    <property type="entry name" value="THIAZOLE SYNTHASE"/>
    <property type="match status" value="1"/>
</dbReference>
<dbReference type="PANTHER" id="PTHR34266:SF2">
    <property type="entry name" value="THIAZOLE SYNTHASE"/>
    <property type="match status" value="1"/>
</dbReference>
<dbReference type="Pfam" id="PF05690">
    <property type="entry name" value="ThiG"/>
    <property type="match status" value="1"/>
</dbReference>
<dbReference type="SUPFAM" id="SSF110399">
    <property type="entry name" value="ThiG-like"/>
    <property type="match status" value="1"/>
</dbReference>
<comment type="function">
    <text evidence="1">Catalyzes the rearrangement of 1-deoxy-D-xylulose 5-phosphate (DXP) to produce the thiazole phosphate moiety of thiamine. Sulfur is provided by the thiocarboxylate moiety of the carrier protein ThiS. In vitro, sulfur can be provided by H(2)S.</text>
</comment>
<comment type="catalytic activity">
    <reaction evidence="1">
        <text>[ThiS sulfur-carrier protein]-C-terminal-Gly-aminoethanethioate + 2-iminoacetate + 1-deoxy-D-xylulose 5-phosphate = [ThiS sulfur-carrier protein]-C-terminal Gly-Gly + 2-[(2R,5Z)-2-carboxy-4-methylthiazol-5(2H)-ylidene]ethyl phosphate + 2 H2O + H(+)</text>
        <dbReference type="Rhea" id="RHEA:26297"/>
        <dbReference type="Rhea" id="RHEA-COMP:12909"/>
        <dbReference type="Rhea" id="RHEA-COMP:19908"/>
        <dbReference type="ChEBI" id="CHEBI:15377"/>
        <dbReference type="ChEBI" id="CHEBI:15378"/>
        <dbReference type="ChEBI" id="CHEBI:57792"/>
        <dbReference type="ChEBI" id="CHEBI:62899"/>
        <dbReference type="ChEBI" id="CHEBI:77846"/>
        <dbReference type="ChEBI" id="CHEBI:90778"/>
        <dbReference type="ChEBI" id="CHEBI:232372"/>
        <dbReference type="EC" id="2.8.1.10"/>
    </reaction>
</comment>
<comment type="pathway">
    <text evidence="1">Cofactor biosynthesis; thiamine diphosphate biosynthesis.</text>
</comment>
<comment type="subunit">
    <text evidence="1">Homotetramer. Forms heterodimers with either ThiH or ThiS.</text>
</comment>
<comment type="subcellular location">
    <subcellularLocation>
        <location evidence="1">Cytoplasm</location>
    </subcellularLocation>
</comment>
<comment type="similarity">
    <text evidence="1">Belongs to the ThiG family.</text>
</comment>
<feature type="chain" id="PRO_1000072334" description="Thiazole synthase">
    <location>
        <begin position="1"/>
        <end position="266"/>
    </location>
</feature>
<feature type="active site" description="Schiff-base intermediate with DXP" evidence="1">
    <location>
        <position position="107"/>
    </location>
</feature>
<feature type="binding site" evidence="1">
    <location>
        <position position="168"/>
    </location>
    <ligand>
        <name>1-deoxy-D-xylulose 5-phosphate</name>
        <dbReference type="ChEBI" id="CHEBI:57792"/>
    </ligand>
</feature>
<feature type="binding site" evidence="1">
    <location>
        <begin position="194"/>
        <end position="195"/>
    </location>
    <ligand>
        <name>1-deoxy-D-xylulose 5-phosphate</name>
        <dbReference type="ChEBI" id="CHEBI:57792"/>
    </ligand>
</feature>
<feature type="binding site" evidence="1">
    <location>
        <begin position="216"/>
        <end position="217"/>
    </location>
    <ligand>
        <name>1-deoxy-D-xylulose 5-phosphate</name>
        <dbReference type="ChEBI" id="CHEBI:57792"/>
    </ligand>
</feature>